<evidence type="ECO:0000250" key="1"/>
<evidence type="ECO:0000250" key="2">
    <source>
        <dbReference type="UniProtKB" id="P33643"/>
    </source>
</evidence>
<evidence type="ECO:0000255" key="3">
    <source>
        <dbReference type="PROSITE-ProRule" id="PRU00182"/>
    </source>
</evidence>
<evidence type="ECO:0000305" key="4"/>
<sequence length="325" mass="36604">MAQQIVLTNTVKDSQLGQRLDQAIAELFADFSRSRLKEWLLDGKVQVNGEVVTKPRTKVMGGEEITLQAELEDEERWEAQDIPLDIVYEDDDIIVINKPRDFVVHPGAGTPDGTVLNALLHHYPDIAEVPRAGIVHRLDKDTTGLMVVAKTVPAQTRLVRALQKRNITREYEAIAIGRMTAGGKVDQPIGRHSTKRTLMAVAPLGKPAVTHYRVAEHFREHTRIRLRLETGRTHQIRVHMSYLQHPLLGDTAYGGRARIPTGASQELTDMIRGFDRQALHAVMLRFEHPITGEELEFHAPVPDDMVAMTEALRKDTEEYGLPDEF</sequence>
<protein>
    <recommendedName>
        <fullName evidence="2">Ribosomal large subunit pseudouridine synthase D</fullName>
        <ecNumber evidence="2">5.4.99.23</ecNumber>
    </recommendedName>
    <alternativeName>
        <fullName>23S rRNA pseudouridine(1911/1915/1917) synthase</fullName>
    </alternativeName>
    <alternativeName>
        <fullName>rRNA pseudouridylate synthase D</fullName>
    </alternativeName>
    <alternativeName>
        <fullName>rRNA-uridine isomerase D</fullName>
    </alternativeName>
</protein>
<gene>
    <name type="primary">rluD</name>
    <name type="ordered locus">VP0559</name>
</gene>
<keyword id="KW-0963">Cytoplasm</keyword>
<keyword id="KW-0413">Isomerase</keyword>
<keyword id="KW-0694">RNA-binding</keyword>
<keyword id="KW-0698">rRNA processing</keyword>
<comment type="function">
    <text evidence="2">Responsible for synthesis of pseudouridine from uracil at positions 1911, 1915 and 1917 in 23S ribosomal RNA.</text>
</comment>
<comment type="catalytic activity">
    <reaction evidence="2">
        <text>uridine(1911/1915/1917) in 23S rRNA = pseudouridine(1911/1915/1917) in 23S rRNA</text>
        <dbReference type="Rhea" id="RHEA:42524"/>
        <dbReference type="Rhea" id="RHEA-COMP:10097"/>
        <dbReference type="Rhea" id="RHEA-COMP:10098"/>
        <dbReference type="ChEBI" id="CHEBI:65314"/>
        <dbReference type="ChEBI" id="CHEBI:65315"/>
        <dbReference type="EC" id="5.4.99.23"/>
    </reaction>
</comment>
<comment type="subcellular location">
    <subcellularLocation>
        <location evidence="2">Cytoplasm</location>
    </subcellularLocation>
    <text evidence="2">Associates with late stage pre-50S ribosomal subunits.</text>
</comment>
<comment type="similarity">
    <text evidence="4">Belongs to the pseudouridine synthase RluA family.</text>
</comment>
<feature type="chain" id="PRO_0000162703" description="Ribosomal large subunit pseudouridine synthase D">
    <location>
        <begin position="1"/>
        <end position="325"/>
    </location>
</feature>
<feature type="domain" description="S4 RNA-binding" evidence="3">
    <location>
        <begin position="18"/>
        <end position="91"/>
    </location>
</feature>
<feature type="active site" evidence="1">
    <location>
        <position position="139"/>
    </location>
</feature>
<organism>
    <name type="scientific">Vibrio parahaemolyticus serotype O3:K6 (strain RIMD 2210633)</name>
    <dbReference type="NCBI Taxonomy" id="223926"/>
    <lineage>
        <taxon>Bacteria</taxon>
        <taxon>Pseudomonadati</taxon>
        <taxon>Pseudomonadota</taxon>
        <taxon>Gammaproteobacteria</taxon>
        <taxon>Vibrionales</taxon>
        <taxon>Vibrionaceae</taxon>
        <taxon>Vibrio</taxon>
    </lineage>
</organism>
<proteinExistence type="inferred from homology"/>
<reference key="1">
    <citation type="journal article" date="2003" name="Lancet">
        <title>Genome sequence of Vibrio parahaemolyticus: a pathogenic mechanism distinct from that of V. cholerae.</title>
        <authorList>
            <person name="Makino K."/>
            <person name="Oshima K."/>
            <person name="Kurokawa K."/>
            <person name="Yokoyama K."/>
            <person name="Uda T."/>
            <person name="Tagomori K."/>
            <person name="Iijima Y."/>
            <person name="Najima M."/>
            <person name="Nakano M."/>
            <person name="Yamashita A."/>
            <person name="Kubota Y."/>
            <person name="Kimura S."/>
            <person name="Yasunaga T."/>
            <person name="Honda T."/>
            <person name="Shinagawa H."/>
            <person name="Hattori M."/>
            <person name="Iida T."/>
        </authorList>
    </citation>
    <scope>NUCLEOTIDE SEQUENCE [LARGE SCALE GENOMIC DNA]</scope>
    <source>
        <strain>RIMD 2210633</strain>
    </source>
</reference>
<name>RLUD_VIBPA</name>
<accession>Q87S65</accession>
<dbReference type="EC" id="5.4.99.23" evidence="2"/>
<dbReference type="EMBL" id="BA000031">
    <property type="protein sequence ID" value="BAC58822.1"/>
    <property type="molecule type" value="Genomic_DNA"/>
</dbReference>
<dbReference type="RefSeq" id="NP_796938.1">
    <property type="nucleotide sequence ID" value="NC_004603.1"/>
</dbReference>
<dbReference type="RefSeq" id="WP_005460300.1">
    <property type="nucleotide sequence ID" value="NC_004603.1"/>
</dbReference>
<dbReference type="SMR" id="Q87S65"/>
<dbReference type="GeneID" id="1188027"/>
<dbReference type="KEGG" id="vpa:VP0559"/>
<dbReference type="PATRIC" id="fig|223926.6.peg.531"/>
<dbReference type="eggNOG" id="COG0564">
    <property type="taxonomic scope" value="Bacteria"/>
</dbReference>
<dbReference type="HOGENOM" id="CLU_016902_4_0_6"/>
<dbReference type="Proteomes" id="UP000002493">
    <property type="component" value="Chromosome 1"/>
</dbReference>
<dbReference type="GO" id="GO:0005737">
    <property type="term" value="C:cytoplasm"/>
    <property type="evidence" value="ECO:0007669"/>
    <property type="project" value="UniProtKB-SubCell"/>
</dbReference>
<dbReference type="GO" id="GO:0160140">
    <property type="term" value="F:23S rRNA pseudouridine(1911/1915/1917) synthase activity"/>
    <property type="evidence" value="ECO:0007669"/>
    <property type="project" value="UniProtKB-EC"/>
</dbReference>
<dbReference type="GO" id="GO:0003723">
    <property type="term" value="F:RNA binding"/>
    <property type="evidence" value="ECO:0007669"/>
    <property type="project" value="UniProtKB-KW"/>
</dbReference>
<dbReference type="GO" id="GO:0000455">
    <property type="term" value="P:enzyme-directed rRNA pseudouridine synthesis"/>
    <property type="evidence" value="ECO:0007669"/>
    <property type="project" value="UniProtKB-ARBA"/>
</dbReference>
<dbReference type="CDD" id="cd02869">
    <property type="entry name" value="PseudoU_synth_RluA_like"/>
    <property type="match status" value="1"/>
</dbReference>
<dbReference type="CDD" id="cd00165">
    <property type="entry name" value="S4"/>
    <property type="match status" value="1"/>
</dbReference>
<dbReference type="FunFam" id="3.10.290.10:FF:000011">
    <property type="entry name" value="Pseudouridine synthase"/>
    <property type="match status" value="1"/>
</dbReference>
<dbReference type="FunFam" id="3.30.2350.10:FF:000006">
    <property type="entry name" value="Pseudouridine synthase"/>
    <property type="match status" value="1"/>
</dbReference>
<dbReference type="Gene3D" id="3.30.2350.10">
    <property type="entry name" value="Pseudouridine synthase"/>
    <property type="match status" value="1"/>
</dbReference>
<dbReference type="Gene3D" id="3.10.290.10">
    <property type="entry name" value="RNA-binding S4 domain"/>
    <property type="match status" value="1"/>
</dbReference>
<dbReference type="InterPro" id="IPR020103">
    <property type="entry name" value="PsdUridine_synth_cat_dom_sf"/>
</dbReference>
<dbReference type="InterPro" id="IPR006224">
    <property type="entry name" value="PsdUridine_synth_RluA-like_CS"/>
</dbReference>
<dbReference type="InterPro" id="IPR006225">
    <property type="entry name" value="PsdUridine_synth_RluC/D"/>
</dbReference>
<dbReference type="InterPro" id="IPR006145">
    <property type="entry name" value="PsdUridine_synth_RsuA/RluA"/>
</dbReference>
<dbReference type="InterPro" id="IPR050188">
    <property type="entry name" value="RluA_PseudoU_synthase"/>
</dbReference>
<dbReference type="InterPro" id="IPR002942">
    <property type="entry name" value="S4_RNA-bd"/>
</dbReference>
<dbReference type="InterPro" id="IPR036986">
    <property type="entry name" value="S4_RNA-bd_sf"/>
</dbReference>
<dbReference type="NCBIfam" id="NF008385">
    <property type="entry name" value="PRK11180.1"/>
    <property type="match status" value="1"/>
</dbReference>
<dbReference type="NCBIfam" id="TIGR00005">
    <property type="entry name" value="rluA_subfam"/>
    <property type="match status" value="1"/>
</dbReference>
<dbReference type="PANTHER" id="PTHR21600">
    <property type="entry name" value="MITOCHONDRIAL RNA PSEUDOURIDINE SYNTHASE"/>
    <property type="match status" value="1"/>
</dbReference>
<dbReference type="PANTHER" id="PTHR21600:SF44">
    <property type="entry name" value="RIBOSOMAL LARGE SUBUNIT PSEUDOURIDINE SYNTHASE D"/>
    <property type="match status" value="1"/>
</dbReference>
<dbReference type="Pfam" id="PF00849">
    <property type="entry name" value="PseudoU_synth_2"/>
    <property type="match status" value="1"/>
</dbReference>
<dbReference type="Pfam" id="PF01479">
    <property type="entry name" value="S4"/>
    <property type="match status" value="1"/>
</dbReference>
<dbReference type="SMART" id="SM00363">
    <property type="entry name" value="S4"/>
    <property type="match status" value="1"/>
</dbReference>
<dbReference type="SUPFAM" id="SSF55174">
    <property type="entry name" value="Alpha-L RNA-binding motif"/>
    <property type="match status" value="1"/>
</dbReference>
<dbReference type="SUPFAM" id="SSF55120">
    <property type="entry name" value="Pseudouridine synthase"/>
    <property type="match status" value="1"/>
</dbReference>
<dbReference type="PROSITE" id="PS01129">
    <property type="entry name" value="PSI_RLU"/>
    <property type="match status" value="1"/>
</dbReference>
<dbReference type="PROSITE" id="PS50889">
    <property type="entry name" value="S4"/>
    <property type="match status" value="1"/>
</dbReference>